<name>BUK_BACAC</name>
<dbReference type="EC" id="2.7.2.7" evidence="1"/>
<dbReference type="EMBL" id="CP001215">
    <property type="protein sequence ID" value="ACP12330.1"/>
    <property type="molecule type" value="Genomic_DNA"/>
</dbReference>
<dbReference type="RefSeq" id="WP_000115773.1">
    <property type="nucleotide sequence ID" value="NC_012581.1"/>
</dbReference>
<dbReference type="SMR" id="C3LJT8"/>
<dbReference type="GeneID" id="45024047"/>
<dbReference type="KEGG" id="bah:BAMEG_4423"/>
<dbReference type="HOGENOM" id="CLU_048716_0_0_9"/>
<dbReference type="GO" id="GO:0005737">
    <property type="term" value="C:cytoplasm"/>
    <property type="evidence" value="ECO:0007669"/>
    <property type="project" value="UniProtKB-SubCell"/>
</dbReference>
<dbReference type="GO" id="GO:0008776">
    <property type="term" value="F:acetate kinase activity"/>
    <property type="evidence" value="ECO:0007669"/>
    <property type="project" value="TreeGrafter"/>
</dbReference>
<dbReference type="GO" id="GO:0005524">
    <property type="term" value="F:ATP binding"/>
    <property type="evidence" value="ECO:0007669"/>
    <property type="project" value="UniProtKB-KW"/>
</dbReference>
<dbReference type="GO" id="GO:0047761">
    <property type="term" value="F:butyrate kinase activity"/>
    <property type="evidence" value="ECO:0007669"/>
    <property type="project" value="UniProtKB-UniRule"/>
</dbReference>
<dbReference type="GO" id="GO:0006083">
    <property type="term" value="P:acetate metabolic process"/>
    <property type="evidence" value="ECO:0007669"/>
    <property type="project" value="TreeGrafter"/>
</dbReference>
<dbReference type="CDD" id="cd24011">
    <property type="entry name" value="ASKHA_NBD_BK"/>
    <property type="match status" value="1"/>
</dbReference>
<dbReference type="Gene3D" id="3.30.420.40">
    <property type="match status" value="2"/>
</dbReference>
<dbReference type="HAMAP" id="MF_00542">
    <property type="entry name" value="Butyrate_kinase"/>
    <property type="match status" value="1"/>
</dbReference>
<dbReference type="InterPro" id="IPR000890">
    <property type="entry name" value="Aliphatic_acid_kin_short-chain"/>
</dbReference>
<dbReference type="InterPro" id="IPR023865">
    <property type="entry name" value="Aliphatic_acid_kinase_CS"/>
</dbReference>
<dbReference type="InterPro" id="IPR043129">
    <property type="entry name" value="ATPase_NBD"/>
</dbReference>
<dbReference type="InterPro" id="IPR011245">
    <property type="entry name" value="Butyrate_kin"/>
</dbReference>
<dbReference type="NCBIfam" id="TIGR02707">
    <property type="entry name" value="butyr_kinase"/>
    <property type="match status" value="1"/>
</dbReference>
<dbReference type="NCBIfam" id="NF002834">
    <property type="entry name" value="PRK03011.1-5"/>
    <property type="match status" value="1"/>
</dbReference>
<dbReference type="PANTHER" id="PTHR21060">
    <property type="entry name" value="ACETATE KINASE"/>
    <property type="match status" value="1"/>
</dbReference>
<dbReference type="PANTHER" id="PTHR21060:SF3">
    <property type="entry name" value="BUTYRATE KINASE 2-RELATED"/>
    <property type="match status" value="1"/>
</dbReference>
<dbReference type="Pfam" id="PF00871">
    <property type="entry name" value="Acetate_kinase"/>
    <property type="match status" value="1"/>
</dbReference>
<dbReference type="PIRSF" id="PIRSF036458">
    <property type="entry name" value="Butyrate_kin"/>
    <property type="match status" value="1"/>
</dbReference>
<dbReference type="PRINTS" id="PR00471">
    <property type="entry name" value="ACETATEKNASE"/>
</dbReference>
<dbReference type="SUPFAM" id="SSF53067">
    <property type="entry name" value="Actin-like ATPase domain"/>
    <property type="match status" value="2"/>
</dbReference>
<dbReference type="PROSITE" id="PS01075">
    <property type="entry name" value="ACETATE_KINASE_1"/>
    <property type="match status" value="1"/>
</dbReference>
<dbReference type="PROSITE" id="PS01076">
    <property type="entry name" value="ACETATE_KINASE_2"/>
    <property type="match status" value="1"/>
</dbReference>
<accession>C3LJT8</accession>
<sequence length="367" mass="39969">MSVNRILVINPGSTSTKIGVFDNERPVLEETIRHDEEQIGKYKRIIDQYEFRKETILEVLHSHGINISKLNAVCGRGGLLRPIEGGTYTVNDAMLEDLKNGFSGHHASNLGGILAYEIASGLNIPAFIVDPVVVDEMEPIARISGIAGMERKSIFHALNQKAVARKVAEELNHKYEDLNLLVTHMGGGITVGAHKKGKVIDVNNGLNGEGPFSPERAGTVPVGQLVEMCFSGEYYRDEMVKKLVGQGGLVSLIGTNDAIKVEQMVEKGDPEATLIYKAMAYQVAKEIGGASAVLHGKIDAIVLTGGLAYSKILVDEIKERVDWIADVIVHPGEDELQALAEGALRVLREEEAPKEYIVREKETVARG</sequence>
<keyword id="KW-0067">ATP-binding</keyword>
<keyword id="KW-0963">Cytoplasm</keyword>
<keyword id="KW-0418">Kinase</keyword>
<keyword id="KW-0547">Nucleotide-binding</keyword>
<keyword id="KW-0808">Transferase</keyword>
<comment type="catalytic activity">
    <reaction evidence="1">
        <text>butanoate + ATP = butanoyl phosphate + ADP</text>
        <dbReference type="Rhea" id="RHEA:13585"/>
        <dbReference type="ChEBI" id="CHEBI:17968"/>
        <dbReference type="ChEBI" id="CHEBI:30616"/>
        <dbReference type="ChEBI" id="CHEBI:58079"/>
        <dbReference type="ChEBI" id="CHEBI:456216"/>
        <dbReference type="EC" id="2.7.2.7"/>
    </reaction>
</comment>
<comment type="subcellular location">
    <subcellularLocation>
        <location evidence="1">Cytoplasm</location>
    </subcellularLocation>
</comment>
<comment type="similarity">
    <text evidence="1">Belongs to the acetokinase family.</text>
</comment>
<protein>
    <recommendedName>
        <fullName evidence="1">Probable butyrate kinase</fullName>
        <shortName evidence="1">BK</shortName>
        <ecNumber evidence="1">2.7.2.7</ecNumber>
    </recommendedName>
    <alternativeName>
        <fullName evidence="1">Branched-chain carboxylic acid kinase</fullName>
    </alternativeName>
</protein>
<gene>
    <name evidence="1" type="primary">buk</name>
    <name type="ordered locus">BAMEG_4423</name>
</gene>
<reference key="1">
    <citation type="submission" date="2008-10" db="EMBL/GenBank/DDBJ databases">
        <title>Genome sequence of Bacillus anthracis str. CDC 684.</title>
        <authorList>
            <person name="Dodson R.J."/>
            <person name="Munk A.C."/>
            <person name="Brettin T."/>
            <person name="Bruce D."/>
            <person name="Detter C."/>
            <person name="Tapia R."/>
            <person name="Han C."/>
            <person name="Sutton G."/>
            <person name="Sims D."/>
        </authorList>
    </citation>
    <scope>NUCLEOTIDE SEQUENCE [LARGE SCALE GENOMIC DNA]</scope>
    <source>
        <strain>CDC 684 / NRRL 3495</strain>
    </source>
</reference>
<proteinExistence type="inferred from homology"/>
<organism>
    <name type="scientific">Bacillus anthracis (strain CDC 684 / NRRL 3495)</name>
    <dbReference type="NCBI Taxonomy" id="568206"/>
    <lineage>
        <taxon>Bacteria</taxon>
        <taxon>Bacillati</taxon>
        <taxon>Bacillota</taxon>
        <taxon>Bacilli</taxon>
        <taxon>Bacillales</taxon>
        <taxon>Bacillaceae</taxon>
        <taxon>Bacillus</taxon>
        <taxon>Bacillus cereus group</taxon>
    </lineage>
</organism>
<evidence type="ECO:0000255" key="1">
    <source>
        <dbReference type="HAMAP-Rule" id="MF_00542"/>
    </source>
</evidence>
<feature type="chain" id="PRO_1000146586" description="Probable butyrate kinase">
    <location>
        <begin position="1"/>
        <end position="367"/>
    </location>
</feature>